<protein>
    <recommendedName>
        <fullName evidence="1">Probable Fe(2+)-trafficking protein</fullName>
    </recommendedName>
</protein>
<name>FETP_PECAS</name>
<proteinExistence type="inferred from homology"/>
<sequence>MSRTIFCTVLQRDAEGQDFQLYPGDLGKRIYNEISKEAWAQWQTKQTMLINEKKLSMMNVDDRKLLEQEMIKFLFEGKDVHIEGYTPPSH</sequence>
<accession>Q6D8J9</accession>
<dbReference type="EMBL" id="BX950851">
    <property type="protein sequence ID" value="CAG73886.1"/>
    <property type="molecule type" value="Genomic_DNA"/>
</dbReference>
<dbReference type="RefSeq" id="WP_011092575.1">
    <property type="nucleotide sequence ID" value="NC_004547.2"/>
</dbReference>
<dbReference type="SMR" id="Q6D8J9"/>
<dbReference type="STRING" id="218491.ECA0975"/>
<dbReference type="KEGG" id="eca:ECA0975"/>
<dbReference type="eggNOG" id="COG2924">
    <property type="taxonomic scope" value="Bacteria"/>
</dbReference>
<dbReference type="HOGENOM" id="CLU_170994_0_0_6"/>
<dbReference type="OrthoDB" id="9804318at2"/>
<dbReference type="Proteomes" id="UP000007966">
    <property type="component" value="Chromosome"/>
</dbReference>
<dbReference type="GO" id="GO:0005829">
    <property type="term" value="C:cytosol"/>
    <property type="evidence" value="ECO:0007669"/>
    <property type="project" value="TreeGrafter"/>
</dbReference>
<dbReference type="GO" id="GO:0005506">
    <property type="term" value="F:iron ion binding"/>
    <property type="evidence" value="ECO:0007669"/>
    <property type="project" value="UniProtKB-UniRule"/>
</dbReference>
<dbReference type="GO" id="GO:0034599">
    <property type="term" value="P:cellular response to oxidative stress"/>
    <property type="evidence" value="ECO:0007669"/>
    <property type="project" value="TreeGrafter"/>
</dbReference>
<dbReference type="FunFam" id="1.10.3880.10:FF:000001">
    <property type="entry name" value="Probable Fe(2+)-trafficking protein"/>
    <property type="match status" value="1"/>
</dbReference>
<dbReference type="Gene3D" id="1.10.3880.10">
    <property type="entry name" value="Fe(II) trafficking protein YggX"/>
    <property type="match status" value="1"/>
</dbReference>
<dbReference type="HAMAP" id="MF_00686">
    <property type="entry name" value="Fe_traffic_YggX"/>
    <property type="match status" value="1"/>
</dbReference>
<dbReference type="InterPro" id="IPR007457">
    <property type="entry name" value="Fe_traffick_prot_YggX"/>
</dbReference>
<dbReference type="InterPro" id="IPR036766">
    <property type="entry name" value="Fe_traffick_prot_YggX_sf"/>
</dbReference>
<dbReference type="NCBIfam" id="NF003817">
    <property type="entry name" value="PRK05408.1"/>
    <property type="match status" value="1"/>
</dbReference>
<dbReference type="PANTHER" id="PTHR36965">
    <property type="entry name" value="FE(2+)-TRAFFICKING PROTEIN-RELATED"/>
    <property type="match status" value="1"/>
</dbReference>
<dbReference type="PANTHER" id="PTHR36965:SF1">
    <property type="entry name" value="FE(2+)-TRAFFICKING PROTEIN-RELATED"/>
    <property type="match status" value="1"/>
</dbReference>
<dbReference type="Pfam" id="PF04362">
    <property type="entry name" value="Iron_traffic"/>
    <property type="match status" value="1"/>
</dbReference>
<dbReference type="PIRSF" id="PIRSF029827">
    <property type="entry name" value="Fe_traffic_YggX"/>
    <property type="match status" value="1"/>
</dbReference>
<dbReference type="SUPFAM" id="SSF111148">
    <property type="entry name" value="YggX-like"/>
    <property type="match status" value="1"/>
</dbReference>
<reference key="1">
    <citation type="journal article" date="2004" name="Proc. Natl. Acad. Sci. U.S.A.">
        <title>Genome sequence of the enterobacterial phytopathogen Erwinia carotovora subsp. atroseptica and characterization of virulence factors.</title>
        <authorList>
            <person name="Bell K.S."/>
            <person name="Sebaihia M."/>
            <person name="Pritchard L."/>
            <person name="Holden M.T.G."/>
            <person name="Hyman L.J."/>
            <person name="Holeva M.C."/>
            <person name="Thomson N.R."/>
            <person name="Bentley S.D."/>
            <person name="Churcher L.J.C."/>
            <person name="Mungall K."/>
            <person name="Atkin R."/>
            <person name="Bason N."/>
            <person name="Brooks K."/>
            <person name="Chillingworth T."/>
            <person name="Clark K."/>
            <person name="Doggett J."/>
            <person name="Fraser A."/>
            <person name="Hance Z."/>
            <person name="Hauser H."/>
            <person name="Jagels K."/>
            <person name="Moule S."/>
            <person name="Norbertczak H."/>
            <person name="Ormond D."/>
            <person name="Price C."/>
            <person name="Quail M.A."/>
            <person name="Sanders M."/>
            <person name="Walker D."/>
            <person name="Whitehead S."/>
            <person name="Salmond G.P.C."/>
            <person name="Birch P.R.J."/>
            <person name="Parkhill J."/>
            <person name="Toth I.K."/>
        </authorList>
    </citation>
    <scope>NUCLEOTIDE SEQUENCE [LARGE SCALE GENOMIC DNA]</scope>
    <source>
        <strain>SCRI 1043 / ATCC BAA-672</strain>
    </source>
</reference>
<keyword id="KW-0408">Iron</keyword>
<keyword id="KW-1185">Reference proteome</keyword>
<feature type="chain" id="PRO_0000214481" description="Probable Fe(2+)-trafficking protein">
    <location>
        <begin position="1"/>
        <end position="90"/>
    </location>
</feature>
<organism>
    <name type="scientific">Pectobacterium atrosepticum (strain SCRI 1043 / ATCC BAA-672)</name>
    <name type="common">Erwinia carotovora subsp. atroseptica</name>
    <dbReference type="NCBI Taxonomy" id="218491"/>
    <lineage>
        <taxon>Bacteria</taxon>
        <taxon>Pseudomonadati</taxon>
        <taxon>Pseudomonadota</taxon>
        <taxon>Gammaproteobacteria</taxon>
        <taxon>Enterobacterales</taxon>
        <taxon>Pectobacteriaceae</taxon>
        <taxon>Pectobacterium</taxon>
    </lineage>
</organism>
<evidence type="ECO:0000255" key="1">
    <source>
        <dbReference type="HAMAP-Rule" id="MF_00686"/>
    </source>
</evidence>
<comment type="function">
    <text evidence="1">Could be a mediator in iron transactions between iron acquisition and iron-requiring processes, such as synthesis and/or repair of Fe-S clusters in biosynthetic enzymes.</text>
</comment>
<comment type="subunit">
    <text evidence="1">Monomer.</text>
</comment>
<comment type="similarity">
    <text evidence="1">Belongs to the Fe(2+)-trafficking protein family.</text>
</comment>
<gene>
    <name type="ordered locus">ECA0975</name>
</gene>